<name>SYLC_VAIC1</name>
<gene>
    <name type="ORF">NCER_100842</name>
</gene>
<keyword id="KW-0030">Aminoacyl-tRNA synthetase</keyword>
<keyword id="KW-0067">ATP-binding</keyword>
<keyword id="KW-0963">Cytoplasm</keyword>
<keyword id="KW-0436">Ligase</keyword>
<keyword id="KW-0547">Nucleotide-binding</keyword>
<keyword id="KW-0648">Protein biosynthesis</keyword>
<keyword id="KW-1185">Reference proteome</keyword>
<dbReference type="EC" id="6.1.1.4"/>
<dbReference type="EMBL" id="ACOL01000057">
    <property type="protein sequence ID" value="EEQ82449.1"/>
    <property type="molecule type" value="Genomic_DNA"/>
</dbReference>
<dbReference type="RefSeq" id="XP_002996120.1">
    <property type="nucleotide sequence ID" value="XM_002996074.1"/>
</dbReference>
<dbReference type="SMR" id="C4V8L1"/>
<dbReference type="FunCoup" id="C4V8L1">
    <property type="interactions" value="247"/>
</dbReference>
<dbReference type="STRING" id="578460.C4V8L1"/>
<dbReference type="KEGG" id="nce:NCER_100842"/>
<dbReference type="VEuPathDB" id="MicrosporidiaDB:NCER_100842"/>
<dbReference type="HOGENOM" id="CLU_004174_0_0_1"/>
<dbReference type="InParanoid" id="C4V8L1"/>
<dbReference type="OMA" id="RMCLAVC"/>
<dbReference type="OrthoDB" id="7704at6029"/>
<dbReference type="Proteomes" id="UP000009082">
    <property type="component" value="Unassembled WGS sequence"/>
</dbReference>
<dbReference type="GO" id="GO:0005737">
    <property type="term" value="C:cytoplasm"/>
    <property type="evidence" value="ECO:0007669"/>
    <property type="project" value="UniProtKB-SubCell"/>
</dbReference>
<dbReference type="GO" id="GO:0005524">
    <property type="term" value="F:ATP binding"/>
    <property type="evidence" value="ECO:0007669"/>
    <property type="project" value="UniProtKB-KW"/>
</dbReference>
<dbReference type="GO" id="GO:0004823">
    <property type="term" value="F:leucine-tRNA ligase activity"/>
    <property type="evidence" value="ECO:0007669"/>
    <property type="project" value="UniProtKB-EC"/>
</dbReference>
<dbReference type="GO" id="GO:0006429">
    <property type="term" value="P:leucyl-tRNA aminoacylation"/>
    <property type="evidence" value="ECO:0007669"/>
    <property type="project" value="InterPro"/>
</dbReference>
<dbReference type="CDD" id="cd00812">
    <property type="entry name" value="LeuRS_core"/>
    <property type="match status" value="1"/>
</dbReference>
<dbReference type="Gene3D" id="3.40.50.620">
    <property type="entry name" value="HUPs"/>
    <property type="match status" value="2"/>
</dbReference>
<dbReference type="InterPro" id="IPR001412">
    <property type="entry name" value="aa-tRNA-synth_I_CS"/>
</dbReference>
<dbReference type="InterPro" id="IPR002300">
    <property type="entry name" value="aa-tRNA-synth_Ia"/>
</dbReference>
<dbReference type="InterPro" id="IPR004493">
    <property type="entry name" value="Leu-tRNA-synth_Ia_arc/euk"/>
</dbReference>
<dbReference type="InterPro" id="IPR014729">
    <property type="entry name" value="Rossmann-like_a/b/a_fold"/>
</dbReference>
<dbReference type="InterPro" id="IPR009080">
    <property type="entry name" value="tRNAsynth_Ia_anticodon-bd"/>
</dbReference>
<dbReference type="PANTHER" id="PTHR45794:SF1">
    <property type="entry name" value="LEUCINE--TRNA LIGASE, CYTOPLASMIC"/>
    <property type="match status" value="1"/>
</dbReference>
<dbReference type="PANTHER" id="PTHR45794">
    <property type="entry name" value="LEUCYL-TRNA SYNTHETASE"/>
    <property type="match status" value="1"/>
</dbReference>
<dbReference type="Pfam" id="PF00133">
    <property type="entry name" value="tRNA-synt_1"/>
    <property type="match status" value="1"/>
</dbReference>
<dbReference type="SUPFAM" id="SSF47323">
    <property type="entry name" value="Anticodon-binding domain of a subclass of class I aminoacyl-tRNA synthetases"/>
    <property type="match status" value="1"/>
</dbReference>
<dbReference type="SUPFAM" id="SSF52374">
    <property type="entry name" value="Nucleotidylyl transferase"/>
    <property type="match status" value="1"/>
</dbReference>
<dbReference type="PROSITE" id="PS00178">
    <property type="entry name" value="AA_TRNA_LIGASE_I"/>
    <property type="match status" value="1"/>
</dbReference>
<protein>
    <recommendedName>
        <fullName>Probable leucine--tRNA ligase, cytoplasmic</fullName>
        <ecNumber>6.1.1.4</ecNumber>
    </recommendedName>
    <alternativeName>
        <fullName>Leucyl-tRNA synthetase</fullName>
        <shortName>LeuRS</shortName>
    </alternativeName>
</protein>
<sequence length="884" mass="102520">MNCNEHESTKLNYLNSLEKSRDVKTDISDKPKYFITFPYPYMNGKLHLGHLYSISKADFMSYYKELQGFNVLFPLAFHCTGMPIAALAKKLGEELEGKKTDISTKEIIQNLGFNDVMPFTDPVHWIKTFPKLCISSLKTFGANIDWRRSFVTTDINKYYDSFVRWQFFNLKELGYLSFGKRHSIYCPLDKQMCLDHDRRKGENIKPVRQIMFKFHLHDKILLVRQNSIGKPYKLVCGKSLEVVSFKYNNTSFLAEKIIFDNLKYQINNVKYKESLVLSMDLKDGLTYDGTNIEVEVIEKNILVVKTDTKSDVELYEKEIKALNEIEETLFTLSTSSEGIVESVAKLSVENTKDLLVQTKHFISVYIPEKEVISRSGGICVVSLLDQWYIDYSNEKWKSKVKKCLDNLECGPDTRSMLYAGIDWVNKWGFSRSFGLGTKIPWDTQYLIDSLSDSTIYMAFYTVKHLLFEDLEGKLEIFPSNKLSNDVWDYIFAGKDLVPELYGYLDLLEKCRNNFQYFYPVDLRVSGKDLIKNHLLFFMFNHVALFDEKYWPKRIFTNGHLMLNKEKMSKSTGNFLSVDDALLKYGKSATRMCLAVCGDTNDDANFVEDNANLFILKIYTFVKEIQKLNELVRKKSENETIASYSNADVLLLETVSVNVTEALNAYNSMKYSDVVKFSFFEMVNLINLYNNINGTNILLKNLVYKSATQLLYPIMPDLCRTLIEKYFDSEFNLPEPKLKTNKMISAFEYISELIKKIAASKQAKNNSCVKIAVGKNYSEWKKEIFELIDKIDCPRNNEIKKNKVFIASLLDSVKPILQKSKINITKGNNFVMDYLVNPDKFVMKFNEYEIINEFKFYIENMSNKKAILEEHCDAEPLNPIITFSK</sequence>
<comment type="catalytic activity">
    <reaction>
        <text>tRNA(Leu) + L-leucine + ATP = L-leucyl-tRNA(Leu) + AMP + diphosphate</text>
        <dbReference type="Rhea" id="RHEA:11688"/>
        <dbReference type="Rhea" id="RHEA-COMP:9613"/>
        <dbReference type="Rhea" id="RHEA-COMP:9622"/>
        <dbReference type="ChEBI" id="CHEBI:30616"/>
        <dbReference type="ChEBI" id="CHEBI:33019"/>
        <dbReference type="ChEBI" id="CHEBI:57427"/>
        <dbReference type="ChEBI" id="CHEBI:78442"/>
        <dbReference type="ChEBI" id="CHEBI:78494"/>
        <dbReference type="ChEBI" id="CHEBI:456215"/>
        <dbReference type="EC" id="6.1.1.4"/>
    </reaction>
</comment>
<comment type="subcellular location">
    <subcellularLocation>
        <location evidence="1">Cytoplasm</location>
    </subcellularLocation>
</comment>
<comment type="similarity">
    <text evidence="2">Belongs to the class-I aminoacyl-tRNA synthetase family.</text>
</comment>
<feature type="chain" id="PRO_0000388415" description="Probable leucine--tRNA ligase, cytoplasmic">
    <location>
        <begin position="1"/>
        <end position="884"/>
    </location>
</feature>
<feature type="short sequence motif" description="'HIGH' region" evidence="1">
    <location>
        <begin position="40"/>
        <end position="50"/>
    </location>
</feature>
<feature type="short sequence motif" description="'KMSKS' region" evidence="1">
    <location>
        <begin position="566"/>
        <end position="570"/>
    </location>
</feature>
<feature type="binding site" evidence="1">
    <location>
        <position position="569"/>
    </location>
    <ligand>
        <name>ATP</name>
        <dbReference type="ChEBI" id="CHEBI:30616"/>
    </ligand>
</feature>
<reference key="1">
    <citation type="journal article" date="2009" name="PLoS Pathog.">
        <title>Genomic analyses of the microsporidian Nosema ceranae, an emergent pathogen of honey bees.</title>
        <authorList>
            <person name="Cornman R.S."/>
            <person name="Chen Y.P."/>
            <person name="Schatz M.C."/>
            <person name="Street C."/>
            <person name="Zhao Y."/>
            <person name="Desany B."/>
            <person name="Egholm M."/>
            <person name="Hutchison S."/>
            <person name="Pettis J.S."/>
            <person name="Lipkin W.I."/>
            <person name="Evans J.D."/>
        </authorList>
    </citation>
    <scope>NUCLEOTIDE SEQUENCE [LARGE SCALE GENOMIC DNA]</scope>
    <source>
        <strain>BRL01</strain>
    </source>
</reference>
<accession>C4V8L1</accession>
<organism>
    <name type="scientific">Vairimorpha ceranae (strain BRL01)</name>
    <name type="common">Microsporidian parasite</name>
    <name type="synonym">Nosema ceranae</name>
    <dbReference type="NCBI Taxonomy" id="578460"/>
    <lineage>
        <taxon>Eukaryota</taxon>
        <taxon>Fungi</taxon>
        <taxon>Fungi incertae sedis</taxon>
        <taxon>Microsporidia</taxon>
        <taxon>Nosematidae</taxon>
        <taxon>Vairimorpha</taxon>
    </lineage>
</organism>
<evidence type="ECO:0000250" key="1"/>
<evidence type="ECO:0000305" key="2"/>
<proteinExistence type="inferred from homology"/>